<evidence type="ECO:0000255" key="1">
    <source>
        <dbReference type="HAMAP-Rule" id="MF_01522"/>
    </source>
</evidence>
<feature type="chain" id="PRO_5000110195" description="Probable potassium transport system protein Kup 1">
    <location>
        <begin position="1"/>
        <end position="622"/>
    </location>
</feature>
<feature type="transmembrane region" description="Helical" evidence="1">
    <location>
        <begin position="11"/>
        <end position="31"/>
    </location>
</feature>
<feature type="transmembrane region" description="Helical" evidence="1">
    <location>
        <begin position="50"/>
        <end position="70"/>
    </location>
</feature>
<feature type="transmembrane region" description="Helical" evidence="1">
    <location>
        <begin position="101"/>
        <end position="121"/>
    </location>
</feature>
<feature type="transmembrane region" description="Helical" evidence="1">
    <location>
        <begin position="137"/>
        <end position="157"/>
    </location>
</feature>
<feature type="transmembrane region" description="Helical" evidence="1">
    <location>
        <begin position="168"/>
        <end position="188"/>
    </location>
</feature>
<feature type="transmembrane region" description="Helical" evidence="1">
    <location>
        <begin position="215"/>
        <end position="235"/>
    </location>
</feature>
<feature type="transmembrane region" description="Helical" evidence="1">
    <location>
        <begin position="247"/>
        <end position="267"/>
    </location>
</feature>
<feature type="transmembrane region" description="Helical" evidence="1">
    <location>
        <begin position="285"/>
        <end position="305"/>
    </location>
</feature>
<feature type="transmembrane region" description="Helical" evidence="1">
    <location>
        <begin position="337"/>
        <end position="357"/>
    </location>
</feature>
<feature type="transmembrane region" description="Helical" evidence="1">
    <location>
        <begin position="366"/>
        <end position="386"/>
    </location>
</feature>
<feature type="transmembrane region" description="Helical" evidence="1">
    <location>
        <begin position="393"/>
        <end position="413"/>
    </location>
</feature>
<feature type="transmembrane region" description="Helical" evidence="1">
    <location>
        <begin position="419"/>
        <end position="439"/>
    </location>
</feature>
<gene>
    <name evidence="1" type="primary">kup1</name>
    <name type="ordered locus">Rfer_0764</name>
</gene>
<accession>Q220N9</accession>
<name>KUP1_ALBFT</name>
<organism>
    <name type="scientific">Albidiferax ferrireducens (strain ATCC BAA-621 / DSM 15236 / T118)</name>
    <name type="common">Rhodoferax ferrireducens</name>
    <dbReference type="NCBI Taxonomy" id="338969"/>
    <lineage>
        <taxon>Bacteria</taxon>
        <taxon>Pseudomonadati</taxon>
        <taxon>Pseudomonadota</taxon>
        <taxon>Betaproteobacteria</taxon>
        <taxon>Burkholderiales</taxon>
        <taxon>Comamonadaceae</taxon>
        <taxon>Rhodoferax</taxon>
    </lineage>
</organism>
<reference key="1">
    <citation type="submission" date="2006-02" db="EMBL/GenBank/DDBJ databases">
        <title>Complete sequence of chromosome of Rhodoferax ferrireducens DSM 15236.</title>
        <authorList>
            <person name="Copeland A."/>
            <person name="Lucas S."/>
            <person name="Lapidus A."/>
            <person name="Barry K."/>
            <person name="Detter J.C."/>
            <person name="Glavina del Rio T."/>
            <person name="Hammon N."/>
            <person name="Israni S."/>
            <person name="Pitluck S."/>
            <person name="Brettin T."/>
            <person name="Bruce D."/>
            <person name="Han C."/>
            <person name="Tapia R."/>
            <person name="Gilna P."/>
            <person name="Kiss H."/>
            <person name="Schmutz J."/>
            <person name="Larimer F."/>
            <person name="Land M."/>
            <person name="Kyrpides N."/>
            <person name="Ivanova N."/>
            <person name="Richardson P."/>
        </authorList>
    </citation>
    <scope>NUCLEOTIDE SEQUENCE [LARGE SCALE GENOMIC DNA]</scope>
    <source>
        <strain>ATCC BAA-621 / DSM 15236 / T118</strain>
    </source>
</reference>
<protein>
    <recommendedName>
        <fullName evidence="1">Probable potassium transport system protein Kup 1</fullName>
    </recommendedName>
</protein>
<dbReference type="EMBL" id="CP000267">
    <property type="protein sequence ID" value="ABD68514.1"/>
    <property type="molecule type" value="Genomic_DNA"/>
</dbReference>
<dbReference type="RefSeq" id="WP_011463087.1">
    <property type="nucleotide sequence ID" value="NC_007908.1"/>
</dbReference>
<dbReference type="STRING" id="338969.Rfer_0764"/>
<dbReference type="KEGG" id="rfr:Rfer_0764"/>
<dbReference type="eggNOG" id="COG3158">
    <property type="taxonomic scope" value="Bacteria"/>
</dbReference>
<dbReference type="HOGENOM" id="CLU_008142_4_2_4"/>
<dbReference type="OrthoDB" id="9805577at2"/>
<dbReference type="Proteomes" id="UP000008332">
    <property type="component" value="Chromosome"/>
</dbReference>
<dbReference type="GO" id="GO:0005886">
    <property type="term" value="C:plasma membrane"/>
    <property type="evidence" value="ECO:0007669"/>
    <property type="project" value="UniProtKB-SubCell"/>
</dbReference>
<dbReference type="GO" id="GO:0015079">
    <property type="term" value="F:potassium ion transmembrane transporter activity"/>
    <property type="evidence" value="ECO:0007669"/>
    <property type="project" value="UniProtKB-UniRule"/>
</dbReference>
<dbReference type="GO" id="GO:0015293">
    <property type="term" value="F:symporter activity"/>
    <property type="evidence" value="ECO:0007669"/>
    <property type="project" value="UniProtKB-UniRule"/>
</dbReference>
<dbReference type="HAMAP" id="MF_01522">
    <property type="entry name" value="Kup"/>
    <property type="match status" value="1"/>
</dbReference>
<dbReference type="InterPro" id="IPR003855">
    <property type="entry name" value="K+_transporter"/>
</dbReference>
<dbReference type="InterPro" id="IPR053952">
    <property type="entry name" value="K_trans_C"/>
</dbReference>
<dbReference type="InterPro" id="IPR053951">
    <property type="entry name" value="K_trans_N"/>
</dbReference>
<dbReference type="InterPro" id="IPR023051">
    <property type="entry name" value="Kup"/>
</dbReference>
<dbReference type="PANTHER" id="PTHR30540:SF79">
    <property type="entry name" value="LOW AFFINITY POTASSIUM TRANSPORT SYSTEM PROTEIN KUP"/>
    <property type="match status" value="1"/>
</dbReference>
<dbReference type="PANTHER" id="PTHR30540">
    <property type="entry name" value="OSMOTIC STRESS POTASSIUM TRANSPORTER"/>
    <property type="match status" value="1"/>
</dbReference>
<dbReference type="Pfam" id="PF02705">
    <property type="entry name" value="K_trans"/>
    <property type="match status" value="1"/>
</dbReference>
<dbReference type="Pfam" id="PF22776">
    <property type="entry name" value="K_trans_C"/>
    <property type="match status" value="1"/>
</dbReference>
<sequence>MTVSKSSLSALTLGAIGVVYGDIGTSVLYAVKEVFGSGHVPFTSDNVYGILSIFFWTLTIIVSLKYVTLVLRADNNGEGGLIAMLALASQSVKDKPALRRVLLLVGIFGTCLFYGDGVITPAISVLSAVEGLEVVSPAFNKFVIPLTLLVLFGLFWVQKRGTAGIGKFFGPITVVWFACIAVLGVAQIATHPTVLWAISPYHALSFIWRQPGTSFIILGAVVLCVTGAEALYADLGHFGKKPIRVAWFAVVMPALTLNYFGQGALLLNNPAAVKNPFFLMAPDWALLPLVGLATLATVIASQALISGAFSVTKQVILLGYLPRLKIMHTNVKEVGQIYLPFVNWGLFVTIVLAVMIFKSSSNLASAYGIAVCTDMLITTILTFFVIRYSWKYPLWLCVAATSFFFVVDFAFWASNLLKLFDGGWFPLLIGGAIFILMITWKDGRRLLNDKLRADAIDLNSFLEAVFVSPPVRVEGTAVFLTVEAGTVPNAMLHNLKHNKVLHANNLFVTVHNHEVPWIGMEKRLEIESLGHDCWQVIINYGFKNDPNIPKALQHIKGRGCDLNDMTTSYFLSRDTIVPTIGSGMAQWREKLFSQMHHNASGAADFLRLPNNAVVELGSKIEI</sequence>
<keyword id="KW-0997">Cell inner membrane</keyword>
<keyword id="KW-1003">Cell membrane</keyword>
<keyword id="KW-0406">Ion transport</keyword>
<keyword id="KW-0472">Membrane</keyword>
<keyword id="KW-0630">Potassium</keyword>
<keyword id="KW-0633">Potassium transport</keyword>
<keyword id="KW-1185">Reference proteome</keyword>
<keyword id="KW-0769">Symport</keyword>
<keyword id="KW-0812">Transmembrane</keyword>
<keyword id="KW-1133">Transmembrane helix</keyword>
<keyword id="KW-0813">Transport</keyword>
<comment type="function">
    <text evidence="1">Transport of potassium into the cell. Likely operates as a K(+):H(+) symporter.</text>
</comment>
<comment type="catalytic activity">
    <reaction evidence="1">
        <text>K(+)(in) + H(+)(in) = K(+)(out) + H(+)(out)</text>
        <dbReference type="Rhea" id="RHEA:28490"/>
        <dbReference type="ChEBI" id="CHEBI:15378"/>
        <dbReference type="ChEBI" id="CHEBI:29103"/>
    </reaction>
    <physiologicalReaction direction="right-to-left" evidence="1">
        <dbReference type="Rhea" id="RHEA:28492"/>
    </physiologicalReaction>
</comment>
<comment type="subcellular location">
    <subcellularLocation>
        <location evidence="1">Cell inner membrane</location>
        <topology evidence="1">Multi-pass membrane protein</topology>
    </subcellularLocation>
</comment>
<comment type="similarity">
    <text evidence="1">Belongs to the HAK/KUP transporter (TC 2.A.72) family.</text>
</comment>
<proteinExistence type="inferred from homology"/>